<evidence type="ECO:0000255" key="1"/>
<evidence type="ECO:0000305" key="2"/>
<proteinExistence type="inferred from homology"/>
<reference key="1">
    <citation type="journal article" date="1994" name="Gene">
        <title>Genetic organization and complete sequence of the Proteus mirabilis pmf fimbrial operon.</title>
        <authorList>
            <person name="Massad G."/>
            <person name="Mobley H.L.T."/>
        </authorList>
    </citation>
    <scope>NUCLEOTIDE SEQUENCE [GENOMIC DNA]</scope>
</reference>
<reference key="2">
    <citation type="journal article" date="2008" name="J. Bacteriol.">
        <title>Complete genome sequence of uropathogenic Proteus mirabilis, a master of both adherence and motility.</title>
        <authorList>
            <person name="Pearson M.M."/>
            <person name="Sebaihia M."/>
            <person name="Churcher C."/>
            <person name="Quail M.A."/>
            <person name="Seshasayee A.S."/>
            <person name="Luscombe N.M."/>
            <person name="Abdellah Z."/>
            <person name="Arrosmith C."/>
            <person name="Atkin B."/>
            <person name="Chillingworth T."/>
            <person name="Hauser H."/>
            <person name="Jagels K."/>
            <person name="Moule S."/>
            <person name="Mungall K."/>
            <person name="Norbertczak H."/>
            <person name="Rabbinowitsch E."/>
            <person name="Walker D."/>
            <person name="Whithead S."/>
            <person name="Thomson N.R."/>
            <person name="Rather P.N."/>
            <person name="Parkhill J."/>
            <person name="Mobley H.L.T."/>
        </authorList>
    </citation>
    <scope>NUCLEOTIDE SEQUENCE [LARGE SCALE GENOMIC DNA]</scope>
    <source>
        <strain>HI4320</strain>
    </source>
</reference>
<dbReference type="EMBL" id="Z35428">
    <property type="protein sequence ID" value="CAA84593.1"/>
    <property type="molecule type" value="Genomic_DNA"/>
</dbReference>
<dbReference type="EMBL" id="AM942759">
    <property type="protein sequence ID" value="CAR43902.1"/>
    <property type="molecule type" value="Genomic_DNA"/>
</dbReference>
<dbReference type="RefSeq" id="WP_012368137.1">
    <property type="nucleotide sequence ID" value="NC_010554.1"/>
</dbReference>
<dbReference type="SMR" id="P53521"/>
<dbReference type="DNASU" id="6802567"/>
<dbReference type="EnsemblBacteria" id="CAR43902">
    <property type="protein sequence ID" value="CAR43902"/>
    <property type="gene ID" value="PMI1881"/>
</dbReference>
<dbReference type="GeneID" id="6802567"/>
<dbReference type="KEGG" id="pmr:PMI1881"/>
<dbReference type="PATRIC" id="fig|529507.6.peg.1833"/>
<dbReference type="eggNOG" id="COG3539">
    <property type="taxonomic scope" value="Bacteria"/>
</dbReference>
<dbReference type="HOGENOM" id="CLU_088965_3_3_6"/>
<dbReference type="Proteomes" id="UP000008319">
    <property type="component" value="Chromosome"/>
</dbReference>
<dbReference type="GO" id="GO:0009289">
    <property type="term" value="C:pilus"/>
    <property type="evidence" value="ECO:0007669"/>
    <property type="project" value="UniProtKB-SubCell"/>
</dbReference>
<dbReference type="GO" id="GO:0043709">
    <property type="term" value="P:cell adhesion involved in single-species biofilm formation"/>
    <property type="evidence" value="ECO:0007669"/>
    <property type="project" value="TreeGrafter"/>
</dbReference>
<dbReference type="Gene3D" id="2.60.40.1090">
    <property type="entry name" value="Fimbrial-type adhesion domain"/>
    <property type="match status" value="1"/>
</dbReference>
<dbReference type="InterPro" id="IPR000259">
    <property type="entry name" value="Adhesion_dom_fimbrial"/>
</dbReference>
<dbReference type="InterPro" id="IPR036937">
    <property type="entry name" value="Adhesion_dom_fimbrial_sf"/>
</dbReference>
<dbReference type="InterPro" id="IPR008966">
    <property type="entry name" value="Adhesion_dom_sf"/>
</dbReference>
<dbReference type="InterPro" id="IPR050263">
    <property type="entry name" value="Bact_Fimbrial_Adh_Pro"/>
</dbReference>
<dbReference type="PANTHER" id="PTHR33420">
    <property type="entry name" value="FIMBRIAL SUBUNIT ELFA-RELATED"/>
    <property type="match status" value="1"/>
</dbReference>
<dbReference type="PANTHER" id="PTHR33420:SF11">
    <property type="entry name" value="FIMBRIAL-LIKE PROTEIN"/>
    <property type="match status" value="1"/>
</dbReference>
<dbReference type="Pfam" id="PF00419">
    <property type="entry name" value="Fimbrial"/>
    <property type="match status" value="1"/>
</dbReference>
<dbReference type="SUPFAM" id="SSF49401">
    <property type="entry name" value="Bacterial adhesins"/>
    <property type="match status" value="1"/>
</dbReference>
<protein>
    <recommendedName>
        <fullName>Putative minor fimbrial subunit PmfF</fullName>
    </recommendedName>
</protein>
<gene>
    <name type="primary">pmfF</name>
    <name type="ordered locus">PMI1881</name>
</gene>
<feature type="signal peptide" evidence="1">
    <location>
        <begin position="1"/>
        <end position="22"/>
    </location>
</feature>
<feature type="chain" id="PRO_0000009233" description="Putative minor fimbrial subunit PmfF">
    <location>
        <begin position="23"/>
        <end position="182"/>
    </location>
</feature>
<name>PMFF_PROMH</name>
<organism>
    <name type="scientific">Proteus mirabilis (strain HI4320)</name>
    <dbReference type="NCBI Taxonomy" id="529507"/>
    <lineage>
        <taxon>Bacteria</taxon>
        <taxon>Pseudomonadati</taxon>
        <taxon>Pseudomonadota</taxon>
        <taxon>Gammaproteobacteria</taxon>
        <taxon>Enterobacterales</taxon>
        <taxon>Morganellaceae</taxon>
        <taxon>Proteus</taxon>
    </lineage>
</organism>
<keyword id="KW-0281">Fimbrium</keyword>
<keyword id="KW-1185">Reference proteome</keyword>
<keyword id="KW-0732">Signal</keyword>
<comment type="subcellular location">
    <subcellularLocation>
        <location>Fimbrium</location>
    </subcellularLocation>
</comment>
<comment type="similarity">
    <text evidence="2">Belongs to the fimbrial protein family.</text>
</comment>
<accession>P53521</accession>
<accession>B4F040</accession>
<sequence length="182" mass="19661">MKNSIIKSAITCLLLLSPSTFAATDIIGGEMEFKGVVVAHGCTIVAGDENKVIDFKQISAKDLYSLQKSNPVAFSISLENCSQDIYKSVTITLDGQAHSTMPNHIAVTGSGSEDPKSIGIAFTDKAHNIIELKKPSAPQQLNNKRVQFNFMAYVEATSSAIQNQTILTGPFQAQATYTLNYQ</sequence>